<protein>
    <recommendedName>
        <fullName evidence="1">ATP-dependent 6-phosphofructokinase</fullName>
        <shortName evidence="1">ATP-PFK</shortName>
        <shortName evidence="1">Phosphofructokinase</shortName>
        <ecNumber evidence="1">2.7.1.11</ecNumber>
    </recommendedName>
    <alternativeName>
        <fullName evidence="1">Phosphohexokinase</fullName>
    </alternativeName>
</protein>
<dbReference type="EC" id="2.7.1.11" evidence="1"/>
<dbReference type="EMBL" id="AB083051">
    <property type="protein sequence ID" value="BAB88667.1"/>
    <property type="molecule type" value="Genomic_DNA"/>
</dbReference>
<dbReference type="EMBL" id="BA000035">
    <property type="protein sequence ID" value="BAC18158.1"/>
    <property type="molecule type" value="Genomic_DNA"/>
</dbReference>
<dbReference type="SMR" id="Q8RQN5"/>
<dbReference type="STRING" id="196164.gene:10741757"/>
<dbReference type="KEGG" id="cef:CE1348"/>
<dbReference type="eggNOG" id="COG0205">
    <property type="taxonomic scope" value="Bacteria"/>
</dbReference>
<dbReference type="HOGENOM" id="CLU_020655_0_0_11"/>
<dbReference type="OrthoDB" id="9802503at2"/>
<dbReference type="UniPathway" id="UPA00109">
    <property type="reaction ID" value="UER00182"/>
</dbReference>
<dbReference type="Proteomes" id="UP000001409">
    <property type="component" value="Chromosome"/>
</dbReference>
<dbReference type="GO" id="GO:0005945">
    <property type="term" value="C:6-phosphofructokinase complex"/>
    <property type="evidence" value="ECO:0007669"/>
    <property type="project" value="TreeGrafter"/>
</dbReference>
<dbReference type="GO" id="GO:0003872">
    <property type="term" value="F:6-phosphofructokinase activity"/>
    <property type="evidence" value="ECO:0007669"/>
    <property type="project" value="UniProtKB-UniRule"/>
</dbReference>
<dbReference type="GO" id="GO:0016208">
    <property type="term" value="F:AMP binding"/>
    <property type="evidence" value="ECO:0007669"/>
    <property type="project" value="TreeGrafter"/>
</dbReference>
<dbReference type="GO" id="GO:0005524">
    <property type="term" value="F:ATP binding"/>
    <property type="evidence" value="ECO:0007669"/>
    <property type="project" value="UniProtKB-KW"/>
</dbReference>
<dbReference type="GO" id="GO:0047334">
    <property type="term" value="F:diphosphate-fructose-6-phosphate 1-phosphotransferase activity"/>
    <property type="evidence" value="ECO:0007669"/>
    <property type="project" value="InterPro"/>
</dbReference>
<dbReference type="GO" id="GO:0070095">
    <property type="term" value="F:fructose-6-phosphate binding"/>
    <property type="evidence" value="ECO:0007669"/>
    <property type="project" value="TreeGrafter"/>
</dbReference>
<dbReference type="GO" id="GO:0042802">
    <property type="term" value="F:identical protein binding"/>
    <property type="evidence" value="ECO:0007669"/>
    <property type="project" value="TreeGrafter"/>
</dbReference>
<dbReference type="GO" id="GO:0046872">
    <property type="term" value="F:metal ion binding"/>
    <property type="evidence" value="ECO:0007669"/>
    <property type="project" value="UniProtKB-KW"/>
</dbReference>
<dbReference type="GO" id="GO:0048029">
    <property type="term" value="F:monosaccharide binding"/>
    <property type="evidence" value="ECO:0007669"/>
    <property type="project" value="TreeGrafter"/>
</dbReference>
<dbReference type="GO" id="GO:0061621">
    <property type="term" value="P:canonical glycolysis"/>
    <property type="evidence" value="ECO:0007669"/>
    <property type="project" value="TreeGrafter"/>
</dbReference>
<dbReference type="GO" id="GO:0030388">
    <property type="term" value="P:fructose 1,6-bisphosphate metabolic process"/>
    <property type="evidence" value="ECO:0007669"/>
    <property type="project" value="TreeGrafter"/>
</dbReference>
<dbReference type="GO" id="GO:0006002">
    <property type="term" value="P:fructose 6-phosphate metabolic process"/>
    <property type="evidence" value="ECO:0007669"/>
    <property type="project" value="InterPro"/>
</dbReference>
<dbReference type="FunFam" id="3.40.50.460:FF:000002">
    <property type="entry name" value="ATP-dependent 6-phosphofructokinase"/>
    <property type="match status" value="1"/>
</dbReference>
<dbReference type="Gene3D" id="3.40.50.450">
    <property type="match status" value="1"/>
</dbReference>
<dbReference type="Gene3D" id="3.40.50.460">
    <property type="entry name" value="Phosphofructokinase domain"/>
    <property type="match status" value="1"/>
</dbReference>
<dbReference type="HAMAP" id="MF_01976">
    <property type="entry name" value="Phosphofructokinase_III"/>
    <property type="match status" value="1"/>
</dbReference>
<dbReference type="InterPro" id="IPR022953">
    <property type="entry name" value="ATP_PFK"/>
</dbReference>
<dbReference type="InterPro" id="IPR012003">
    <property type="entry name" value="ATP_PFK_prok-type"/>
</dbReference>
<dbReference type="InterPro" id="IPR015912">
    <property type="entry name" value="Phosphofructokinase_CS"/>
</dbReference>
<dbReference type="InterPro" id="IPR000023">
    <property type="entry name" value="Phosphofructokinase_dom"/>
</dbReference>
<dbReference type="InterPro" id="IPR012829">
    <property type="entry name" value="Phosphofructokinase_III"/>
</dbReference>
<dbReference type="InterPro" id="IPR035966">
    <property type="entry name" value="PKF_sf"/>
</dbReference>
<dbReference type="NCBIfam" id="TIGR02483">
    <property type="entry name" value="PFK_mixed"/>
    <property type="match status" value="1"/>
</dbReference>
<dbReference type="NCBIfam" id="NF002872">
    <property type="entry name" value="PRK03202.1"/>
    <property type="match status" value="1"/>
</dbReference>
<dbReference type="PANTHER" id="PTHR13697:SF52">
    <property type="entry name" value="ATP-DEPENDENT 6-PHOSPHOFRUCTOKINASE 3"/>
    <property type="match status" value="1"/>
</dbReference>
<dbReference type="PANTHER" id="PTHR13697">
    <property type="entry name" value="PHOSPHOFRUCTOKINASE"/>
    <property type="match status" value="1"/>
</dbReference>
<dbReference type="Pfam" id="PF00365">
    <property type="entry name" value="PFK"/>
    <property type="match status" value="1"/>
</dbReference>
<dbReference type="PIRSF" id="PIRSF000532">
    <property type="entry name" value="ATP_PFK_prok"/>
    <property type="match status" value="1"/>
</dbReference>
<dbReference type="PRINTS" id="PR00476">
    <property type="entry name" value="PHFRCTKINASE"/>
</dbReference>
<dbReference type="SUPFAM" id="SSF53784">
    <property type="entry name" value="Phosphofructokinase"/>
    <property type="match status" value="1"/>
</dbReference>
<dbReference type="PROSITE" id="PS00433">
    <property type="entry name" value="PHOSPHOFRUCTOKINASE"/>
    <property type="match status" value="1"/>
</dbReference>
<proteinExistence type="inferred from homology"/>
<comment type="function">
    <text evidence="1">Catalyzes the phosphorylation of D-fructose 6-phosphate to fructose 1,6-bisphosphate by ATP, the first committing step of glycolysis.</text>
</comment>
<comment type="catalytic activity">
    <reaction evidence="1">
        <text>beta-D-fructose 6-phosphate + ATP = beta-D-fructose 1,6-bisphosphate + ADP + H(+)</text>
        <dbReference type="Rhea" id="RHEA:16109"/>
        <dbReference type="ChEBI" id="CHEBI:15378"/>
        <dbReference type="ChEBI" id="CHEBI:30616"/>
        <dbReference type="ChEBI" id="CHEBI:32966"/>
        <dbReference type="ChEBI" id="CHEBI:57634"/>
        <dbReference type="ChEBI" id="CHEBI:456216"/>
        <dbReference type="EC" id="2.7.1.11"/>
    </reaction>
</comment>
<comment type="cofactor">
    <cofactor evidence="1">
        <name>Mg(2+)</name>
        <dbReference type="ChEBI" id="CHEBI:18420"/>
    </cofactor>
</comment>
<comment type="pathway">
    <text evidence="1">Carbohydrate degradation; glycolysis; D-glyceraldehyde 3-phosphate and glycerone phosphate from D-glucose: step 3/4.</text>
</comment>
<comment type="subunit">
    <text evidence="1">Homodimer or homotetramer.</text>
</comment>
<comment type="subcellular location">
    <subcellularLocation>
        <location evidence="1">Cytoplasm</location>
    </subcellularLocation>
</comment>
<comment type="similarity">
    <text evidence="1">Belongs to the phosphofructokinase type A (PFKA) family. Mixed-substrate PFK group III subfamily.</text>
</comment>
<gene>
    <name evidence="1" type="primary">pfkA</name>
    <name type="synonym">pfk</name>
    <name type="ordered locus">CE1348</name>
</gene>
<organism>
    <name type="scientific">Corynebacterium efficiens (strain DSM 44549 / YS-314 / AJ 12310 / JCM 11189 / NBRC 100395)</name>
    <dbReference type="NCBI Taxonomy" id="196164"/>
    <lineage>
        <taxon>Bacteria</taxon>
        <taxon>Bacillati</taxon>
        <taxon>Actinomycetota</taxon>
        <taxon>Actinomycetes</taxon>
        <taxon>Mycobacteriales</taxon>
        <taxon>Corynebacteriaceae</taxon>
        <taxon>Corynebacterium</taxon>
    </lineage>
</organism>
<sequence>MGAMRIATLTSGGDCPGLNAVIRGIVRTASNEFGSTVVGYQDGWEGLLADRRVQLYDDEDIDRILLRGGTILGTGRLHPDKFRAGIDQVKANLADAGIDALIPIGGEGTLKGAKWLADNGIPVVGVPKTIDNDVNGTDFTFGFDSAVSVATDAIDRLHTTAESHNRVMIVEVMGRHVGWIALHAGMAGGAHYTVIPEVPFDISEICKRMERRFQMGEKYGIIVVAEGALPKEGTMELREGEVDQFGHKTFTGIGQQIADEVHRRLGHDVRTTVLGHIQRGGTPTAFDRVLATRYGVRAARACHEGQFNTVVALKGERIRMISFDEAVGTLKKVPMERWVTAQAMFG</sequence>
<accession>Q8RQN5</accession>
<name>PFKA_COREF</name>
<feature type="chain" id="PRO_0000111947" description="ATP-dependent 6-phosphofructokinase">
    <location>
        <begin position="1"/>
        <end position="346"/>
    </location>
</feature>
<feature type="active site" description="Proton acceptor" evidence="1">
    <location>
        <position position="131"/>
    </location>
</feature>
<feature type="binding site" evidence="1">
    <location>
        <position position="13"/>
    </location>
    <ligand>
        <name>ATP</name>
        <dbReference type="ChEBI" id="CHEBI:30616"/>
    </ligand>
</feature>
<feature type="binding site" evidence="1">
    <location>
        <begin position="76"/>
        <end position="77"/>
    </location>
    <ligand>
        <name>ATP</name>
        <dbReference type="ChEBI" id="CHEBI:30616"/>
    </ligand>
</feature>
<feature type="binding site" evidence="1">
    <location>
        <begin position="106"/>
        <end position="109"/>
    </location>
    <ligand>
        <name>ATP</name>
        <dbReference type="ChEBI" id="CHEBI:30616"/>
    </ligand>
</feature>
<feature type="binding site" evidence="1">
    <location>
        <position position="107"/>
    </location>
    <ligand>
        <name>Mg(2+)</name>
        <dbReference type="ChEBI" id="CHEBI:18420"/>
        <note>catalytic</note>
    </ligand>
</feature>
<feature type="binding site" description="in other chain" evidence="1">
    <location>
        <begin position="129"/>
        <end position="131"/>
    </location>
    <ligand>
        <name>substrate</name>
        <note>ligand shared between dimeric partners</note>
    </ligand>
</feature>
<feature type="binding site" evidence="1">
    <location>
        <position position="166"/>
    </location>
    <ligand>
        <name>substrate</name>
        <note>ligand shared between dimeric partners</note>
    </ligand>
</feature>
<feature type="binding site" description="in other chain" evidence="1">
    <location>
        <begin position="173"/>
        <end position="175"/>
    </location>
    <ligand>
        <name>substrate</name>
        <note>ligand shared between dimeric partners</note>
    </ligand>
</feature>
<feature type="binding site" description="in other chain" evidence="1">
    <location>
        <position position="226"/>
    </location>
    <ligand>
        <name>substrate</name>
        <note>ligand shared between dimeric partners</note>
    </ligand>
</feature>
<feature type="binding site" evidence="1">
    <location>
        <position position="270"/>
    </location>
    <ligand>
        <name>substrate</name>
        <note>ligand shared between dimeric partners</note>
    </ligand>
</feature>
<feature type="binding site" description="in other chain" evidence="1">
    <location>
        <begin position="276"/>
        <end position="279"/>
    </location>
    <ligand>
        <name>substrate</name>
        <note>ligand shared between dimeric partners</note>
    </ligand>
</feature>
<feature type="site" description="Important for substrate specificity; cannot use PPi as phosphoryl donor" evidence="1">
    <location>
        <position position="108"/>
    </location>
</feature>
<reference key="1">
    <citation type="submission" date="2002-04" db="EMBL/GenBank/DDBJ databases">
        <title>pfk of Corynebacterium efficiens.</title>
        <authorList>
            <person name="Hirano S."/>
            <person name="Kimura E."/>
            <person name="Kawahara Y."/>
            <person name="Sugimoto S."/>
        </authorList>
    </citation>
    <scope>NUCLEOTIDE SEQUENCE [GENOMIC DNA]</scope>
    <source>
        <strain>DSM 44549 / YS-314 / AJ 12310 / JCM 11189 / NBRC 100395</strain>
    </source>
</reference>
<reference key="2">
    <citation type="journal article" date="2003" name="Genome Res.">
        <title>Comparative complete genome sequence analysis of the amino acid replacements responsible for the thermostability of Corynebacterium efficiens.</title>
        <authorList>
            <person name="Nishio Y."/>
            <person name="Nakamura Y."/>
            <person name="Kawarabayasi Y."/>
            <person name="Usuda Y."/>
            <person name="Kimura E."/>
            <person name="Sugimoto S."/>
            <person name="Matsui K."/>
            <person name="Yamagishi A."/>
            <person name="Kikuchi H."/>
            <person name="Ikeo K."/>
            <person name="Gojobori T."/>
        </authorList>
    </citation>
    <scope>NUCLEOTIDE SEQUENCE [LARGE SCALE GENOMIC DNA]</scope>
    <source>
        <strain>DSM 44549 / YS-314 / AJ 12310 / JCM 11189 / NBRC 100395</strain>
    </source>
</reference>
<keyword id="KW-0067">ATP-binding</keyword>
<keyword id="KW-0963">Cytoplasm</keyword>
<keyword id="KW-0324">Glycolysis</keyword>
<keyword id="KW-0418">Kinase</keyword>
<keyword id="KW-0460">Magnesium</keyword>
<keyword id="KW-0479">Metal-binding</keyword>
<keyword id="KW-0547">Nucleotide-binding</keyword>
<keyword id="KW-1185">Reference proteome</keyword>
<keyword id="KW-0808">Transferase</keyword>
<evidence type="ECO:0000255" key="1">
    <source>
        <dbReference type="HAMAP-Rule" id="MF_01976"/>
    </source>
</evidence>